<organism>
    <name type="scientific">Paraburkholderia xenovorans (strain LB400)</name>
    <dbReference type="NCBI Taxonomy" id="266265"/>
    <lineage>
        <taxon>Bacteria</taxon>
        <taxon>Pseudomonadati</taxon>
        <taxon>Pseudomonadota</taxon>
        <taxon>Betaproteobacteria</taxon>
        <taxon>Burkholderiales</taxon>
        <taxon>Burkholderiaceae</taxon>
        <taxon>Paraburkholderia</taxon>
    </lineage>
</organism>
<sequence>MSLEPFIDSKPFTFGVELEMQIVNTHDYDLTKAGSDLLRLIKDEKIPGNITPEITESMIELSTGICTTHEQAVADLRKIRDTLVSAADHLNVGLCGGGTHAFQQWSERQIVDTPRFQYLSELYGYLAKQFTVFGQHVHIGCPDPNSALYLLHSMSRFIPHFIALSASSPFVQGVDTGFHSARLNSVFAFPLSGRAPFVLTWDSFEEYFSKMVHTGVVNSMKDFYWDIRPKPGFGTIEVRVMDTPLSVDRAAAIACYIQTLARHLLLDKPISPKEDDYLVYTFNRFEACRFGLAGTCINPQTGERKTISEDILETLDRIAPHAEALGSGNALAEIGAIARSQVNDATWLRGVVEREKSLHEAVRQQCLEWRA</sequence>
<reference key="1">
    <citation type="journal article" date="2006" name="Proc. Natl. Acad. Sci. U.S.A.">
        <title>Burkholderia xenovorans LB400 harbors a multi-replicon, 9.73-Mbp genome shaped for versatility.</title>
        <authorList>
            <person name="Chain P.S.G."/>
            <person name="Denef V.J."/>
            <person name="Konstantinidis K.T."/>
            <person name="Vergez L.M."/>
            <person name="Agullo L."/>
            <person name="Reyes V.L."/>
            <person name="Hauser L."/>
            <person name="Cordova M."/>
            <person name="Gomez L."/>
            <person name="Gonzalez M."/>
            <person name="Land M."/>
            <person name="Lao V."/>
            <person name="Larimer F."/>
            <person name="LiPuma J.J."/>
            <person name="Mahenthiralingam E."/>
            <person name="Malfatti S.A."/>
            <person name="Marx C.J."/>
            <person name="Parnell J.J."/>
            <person name="Ramette A."/>
            <person name="Richardson P."/>
            <person name="Seeger M."/>
            <person name="Smith D."/>
            <person name="Spilker T."/>
            <person name="Sul W.J."/>
            <person name="Tsoi T.V."/>
            <person name="Ulrich L.E."/>
            <person name="Zhulin I.B."/>
            <person name="Tiedje J.M."/>
        </authorList>
    </citation>
    <scope>NUCLEOTIDE SEQUENCE [LARGE SCALE GENOMIC DNA]</scope>
    <source>
        <strain>LB400</strain>
    </source>
</reference>
<accession>Q13SL4</accession>
<name>GCS2_PARXL</name>
<protein>
    <recommendedName>
        <fullName evidence="1">Putative glutamate--cysteine ligase 2</fullName>
        <ecNumber evidence="1">6.3.2.2</ecNumber>
    </recommendedName>
    <alternativeName>
        <fullName evidence="1">Gamma-glutamylcysteine synthetase 2</fullName>
        <shortName evidence="1">GCS 2</shortName>
        <shortName evidence="1">Gamma-GCS 2</shortName>
    </alternativeName>
</protein>
<comment type="function">
    <text evidence="1">ATP-dependent carboxylate-amine ligase which exhibits weak glutamate--cysteine ligase activity.</text>
</comment>
<comment type="catalytic activity">
    <reaction evidence="1">
        <text>L-cysteine + L-glutamate + ATP = gamma-L-glutamyl-L-cysteine + ADP + phosphate + H(+)</text>
        <dbReference type="Rhea" id="RHEA:13285"/>
        <dbReference type="ChEBI" id="CHEBI:15378"/>
        <dbReference type="ChEBI" id="CHEBI:29985"/>
        <dbReference type="ChEBI" id="CHEBI:30616"/>
        <dbReference type="ChEBI" id="CHEBI:35235"/>
        <dbReference type="ChEBI" id="CHEBI:43474"/>
        <dbReference type="ChEBI" id="CHEBI:58173"/>
        <dbReference type="ChEBI" id="CHEBI:456216"/>
        <dbReference type="EC" id="6.3.2.2"/>
    </reaction>
</comment>
<comment type="similarity">
    <text evidence="1">Belongs to the glutamate--cysteine ligase type 2 family. YbdK subfamily.</text>
</comment>
<keyword id="KW-0067">ATP-binding</keyword>
<keyword id="KW-0436">Ligase</keyword>
<keyword id="KW-0547">Nucleotide-binding</keyword>
<keyword id="KW-1185">Reference proteome</keyword>
<gene>
    <name type="ordered locus">Bxeno_A4387</name>
    <name type="ORF">Bxe_A0002</name>
</gene>
<dbReference type="EC" id="6.3.2.2" evidence="1"/>
<dbReference type="EMBL" id="CP000270">
    <property type="protein sequence ID" value="ABE32925.1"/>
    <property type="molecule type" value="Genomic_DNA"/>
</dbReference>
<dbReference type="RefSeq" id="WP_011490322.1">
    <property type="nucleotide sequence ID" value="NC_007951.1"/>
</dbReference>
<dbReference type="SMR" id="Q13SL4"/>
<dbReference type="STRING" id="266265.Bxe_A0002"/>
<dbReference type="KEGG" id="bxb:DR64_2182"/>
<dbReference type="KEGG" id="bxe:Bxe_A0002"/>
<dbReference type="PATRIC" id="fig|266265.5.peg.4610"/>
<dbReference type="eggNOG" id="COG2170">
    <property type="taxonomic scope" value="Bacteria"/>
</dbReference>
<dbReference type="OrthoDB" id="9769628at2"/>
<dbReference type="Proteomes" id="UP000001817">
    <property type="component" value="Chromosome 1"/>
</dbReference>
<dbReference type="GO" id="GO:0005524">
    <property type="term" value="F:ATP binding"/>
    <property type="evidence" value="ECO:0007669"/>
    <property type="project" value="UniProtKB-KW"/>
</dbReference>
<dbReference type="GO" id="GO:0004357">
    <property type="term" value="F:glutamate-cysteine ligase activity"/>
    <property type="evidence" value="ECO:0007669"/>
    <property type="project" value="UniProtKB-EC"/>
</dbReference>
<dbReference type="GO" id="GO:0042398">
    <property type="term" value="P:modified amino acid biosynthetic process"/>
    <property type="evidence" value="ECO:0007669"/>
    <property type="project" value="InterPro"/>
</dbReference>
<dbReference type="Gene3D" id="3.30.590.20">
    <property type="match status" value="1"/>
</dbReference>
<dbReference type="HAMAP" id="MF_01609">
    <property type="entry name" value="Glu_cys_ligase_2"/>
    <property type="match status" value="1"/>
</dbReference>
<dbReference type="InterPro" id="IPR050141">
    <property type="entry name" value="GCL_type2/YbdK_subfam"/>
</dbReference>
<dbReference type="InterPro" id="IPR006336">
    <property type="entry name" value="GCS2"/>
</dbReference>
<dbReference type="InterPro" id="IPR014746">
    <property type="entry name" value="Gln_synth/guanido_kin_cat_dom"/>
</dbReference>
<dbReference type="InterPro" id="IPR011793">
    <property type="entry name" value="YbdK"/>
</dbReference>
<dbReference type="NCBIfam" id="TIGR02050">
    <property type="entry name" value="gshA_cyan_rel"/>
    <property type="match status" value="1"/>
</dbReference>
<dbReference type="NCBIfam" id="NF010040">
    <property type="entry name" value="PRK13516.1"/>
    <property type="match status" value="1"/>
</dbReference>
<dbReference type="PANTHER" id="PTHR36510">
    <property type="entry name" value="GLUTAMATE--CYSTEINE LIGASE 2-RELATED"/>
    <property type="match status" value="1"/>
</dbReference>
<dbReference type="PANTHER" id="PTHR36510:SF1">
    <property type="entry name" value="GLUTAMATE--CYSTEINE LIGASE 2-RELATED"/>
    <property type="match status" value="1"/>
</dbReference>
<dbReference type="Pfam" id="PF04107">
    <property type="entry name" value="GCS2"/>
    <property type="match status" value="1"/>
</dbReference>
<dbReference type="SUPFAM" id="SSF55931">
    <property type="entry name" value="Glutamine synthetase/guanido kinase"/>
    <property type="match status" value="1"/>
</dbReference>
<proteinExistence type="inferred from homology"/>
<feature type="chain" id="PRO_0000255797" description="Putative glutamate--cysteine ligase 2">
    <location>
        <begin position="1"/>
        <end position="371"/>
    </location>
</feature>
<evidence type="ECO:0000255" key="1">
    <source>
        <dbReference type="HAMAP-Rule" id="MF_01609"/>
    </source>
</evidence>